<evidence type="ECO:0000255" key="1">
    <source>
        <dbReference type="HAMAP-Rule" id="MF_00804"/>
    </source>
</evidence>
<protein>
    <recommendedName>
        <fullName evidence="1">Betaine aldehyde dehydrogenase</fullName>
        <shortName evidence="1">BADH</shortName>
        <ecNumber evidence="1">1.2.1.8</ecNumber>
    </recommendedName>
</protein>
<sequence>MSRYGLQKLYINGAYTDSTSGDTFDAVNPANGECIAQLQAANAQDVDKAVAAAKQGQPVWAAMTAMERSRILRRAVDILRDRNDELAAIETADTGKPLSETRSVDIVTGADVLEYYAGLIPALEGQQIPLRGSAFVYTRREPLGVVAGIGAWNYPLQIALWKSAPALAAGNAMIFKPSEVTSLTALKLAGIYTEAGLPAGVFNVLTGSGDQVGQMLTEHPGIAKVSFTGGIASGKKVMANAAGSTLKDVTMELGGKSPLIIFADADLDKAADIAMMANFYSSGQVCTNGTRVFVPQALQAAFEQKIVERVKRIHIGDPSDERTNFGPLVSFQHRDSVMRYIDSGKREGATLLIGGYSLTEGALAHGAYVAPTVFTHCRDDMQIVREEIFGPVMSILSYQSEEEVIRRANDTEYGLAAGVVTQDLNRAHRVIHQLQAGICWINTWGESAPEMPVGGYKHSGVGRENGISTLEHYTQIKSIQVELGSFNSVF</sequence>
<proteinExistence type="inferred from homology"/>
<accession>A4TNP1</accession>
<dbReference type="EC" id="1.2.1.8" evidence="1"/>
<dbReference type="EMBL" id="CP000668">
    <property type="protein sequence ID" value="ABP40903.1"/>
    <property type="molecule type" value="Genomic_DNA"/>
</dbReference>
<dbReference type="RefSeq" id="WP_002218281.1">
    <property type="nucleotide sequence ID" value="NZ_CP009715.1"/>
</dbReference>
<dbReference type="SMR" id="A4TNP1"/>
<dbReference type="GeneID" id="57977305"/>
<dbReference type="KEGG" id="ypp:YPDSF_2531"/>
<dbReference type="PATRIC" id="fig|386656.14.peg.4048"/>
<dbReference type="UniPathway" id="UPA00529">
    <property type="reaction ID" value="UER00386"/>
</dbReference>
<dbReference type="GO" id="GO:0008802">
    <property type="term" value="F:betaine-aldehyde dehydrogenase (NAD+) activity"/>
    <property type="evidence" value="ECO:0007669"/>
    <property type="project" value="UniProtKB-UniRule"/>
</dbReference>
<dbReference type="GO" id="GO:0046872">
    <property type="term" value="F:metal ion binding"/>
    <property type="evidence" value="ECO:0007669"/>
    <property type="project" value="UniProtKB-KW"/>
</dbReference>
<dbReference type="GO" id="GO:0019285">
    <property type="term" value="P:glycine betaine biosynthetic process from choline"/>
    <property type="evidence" value="ECO:0007669"/>
    <property type="project" value="UniProtKB-UniRule"/>
</dbReference>
<dbReference type="CDD" id="cd07090">
    <property type="entry name" value="ALDH_F9_TMBADH"/>
    <property type="match status" value="1"/>
</dbReference>
<dbReference type="FunFam" id="3.40.309.10:FF:000014">
    <property type="entry name" value="NAD/NADP-dependent betaine aldehyde dehydrogenase"/>
    <property type="match status" value="1"/>
</dbReference>
<dbReference type="FunFam" id="3.40.605.10:FF:000007">
    <property type="entry name" value="NAD/NADP-dependent betaine aldehyde dehydrogenase"/>
    <property type="match status" value="1"/>
</dbReference>
<dbReference type="Gene3D" id="3.40.605.10">
    <property type="entry name" value="Aldehyde Dehydrogenase, Chain A, domain 1"/>
    <property type="match status" value="1"/>
</dbReference>
<dbReference type="Gene3D" id="3.40.309.10">
    <property type="entry name" value="Aldehyde Dehydrogenase, Chain A, domain 2"/>
    <property type="match status" value="1"/>
</dbReference>
<dbReference type="HAMAP" id="MF_00804">
    <property type="entry name" value="BADH"/>
    <property type="match status" value="1"/>
</dbReference>
<dbReference type="InterPro" id="IPR016161">
    <property type="entry name" value="Ald_DH/histidinol_DH"/>
</dbReference>
<dbReference type="InterPro" id="IPR016163">
    <property type="entry name" value="Ald_DH_C"/>
</dbReference>
<dbReference type="InterPro" id="IPR016160">
    <property type="entry name" value="Ald_DH_CS_CYS"/>
</dbReference>
<dbReference type="InterPro" id="IPR029510">
    <property type="entry name" value="Ald_DH_CS_GLU"/>
</dbReference>
<dbReference type="InterPro" id="IPR016162">
    <property type="entry name" value="Ald_DH_N"/>
</dbReference>
<dbReference type="InterPro" id="IPR015590">
    <property type="entry name" value="Aldehyde_DH_dom"/>
</dbReference>
<dbReference type="InterPro" id="IPR011264">
    <property type="entry name" value="BADH"/>
</dbReference>
<dbReference type="NCBIfam" id="TIGR01804">
    <property type="entry name" value="BADH"/>
    <property type="match status" value="1"/>
</dbReference>
<dbReference type="NCBIfam" id="NF009725">
    <property type="entry name" value="PRK13252.1"/>
    <property type="match status" value="1"/>
</dbReference>
<dbReference type="PANTHER" id="PTHR11699">
    <property type="entry name" value="ALDEHYDE DEHYDROGENASE-RELATED"/>
    <property type="match status" value="1"/>
</dbReference>
<dbReference type="Pfam" id="PF00171">
    <property type="entry name" value="Aldedh"/>
    <property type="match status" value="1"/>
</dbReference>
<dbReference type="SUPFAM" id="SSF53720">
    <property type="entry name" value="ALDH-like"/>
    <property type="match status" value="1"/>
</dbReference>
<dbReference type="PROSITE" id="PS00070">
    <property type="entry name" value="ALDEHYDE_DEHYDR_CYS"/>
    <property type="match status" value="1"/>
</dbReference>
<dbReference type="PROSITE" id="PS00687">
    <property type="entry name" value="ALDEHYDE_DEHYDR_GLU"/>
    <property type="match status" value="1"/>
</dbReference>
<feature type="chain" id="PRO_1000047063" description="Betaine aldehyde dehydrogenase">
    <location>
        <begin position="1"/>
        <end position="490"/>
    </location>
</feature>
<feature type="active site" description="Charge relay system" evidence="1">
    <location>
        <position position="162"/>
    </location>
</feature>
<feature type="active site" description="Proton acceptor" evidence="1">
    <location>
        <position position="252"/>
    </location>
</feature>
<feature type="active site" description="Nucleophile" evidence="1">
    <location>
        <position position="286"/>
    </location>
</feature>
<feature type="active site" description="Charge relay system" evidence="1">
    <location>
        <position position="464"/>
    </location>
</feature>
<feature type="binding site" evidence="1">
    <location>
        <position position="93"/>
    </location>
    <ligand>
        <name>K(+)</name>
        <dbReference type="ChEBI" id="CHEBI:29103"/>
        <label>1</label>
    </ligand>
</feature>
<feature type="binding site" evidence="1">
    <location>
        <begin position="150"/>
        <end position="152"/>
    </location>
    <ligand>
        <name>NAD(+)</name>
        <dbReference type="ChEBI" id="CHEBI:57540"/>
    </ligand>
</feature>
<feature type="binding site" evidence="1">
    <location>
        <begin position="176"/>
        <end position="179"/>
    </location>
    <ligand>
        <name>NAD(+)</name>
        <dbReference type="ChEBI" id="CHEBI:57540"/>
    </ligand>
</feature>
<feature type="binding site" evidence="1">
    <location>
        <position position="180"/>
    </location>
    <ligand>
        <name>K(+)</name>
        <dbReference type="ChEBI" id="CHEBI:29103"/>
        <label>1</label>
    </ligand>
</feature>
<feature type="binding site" evidence="1">
    <location>
        <begin position="230"/>
        <end position="233"/>
    </location>
    <ligand>
        <name>NAD(+)</name>
        <dbReference type="ChEBI" id="CHEBI:57540"/>
    </ligand>
</feature>
<feature type="binding site" evidence="1">
    <location>
        <position position="246"/>
    </location>
    <ligand>
        <name>K(+)</name>
        <dbReference type="ChEBI" id="CHEBI:29103"/>
        <label>2</label>
    </ligand>
</feature>
<feature type="binding site" evidence="1">
    <location>
        <position position="254"/>
    </location>
    <ligand>
        <name>NAD(+)</name>
        <dbReference type="ChEBI" id="CHEBI:57540"/>
    </ligand>
</feature>
<feature type="binding site" description="covalent" evidence="1">
    <location>
        <position position="286"/>
    </location>
    <ligand>
        <name>NAD(+)</name>
        <dbReference type="ChEBI" id="CHEBI:57540"/>
    </ligand>
</feature>
<feature type="binding site" evidence="1">
    <location>
        <position position="387"/>
    </location>
    <ligand>
        <name>NAD(+)</name>
        <dbReference type="ChEBI" id="CHEBI:57540"/>
    </ligand>
</feature>
<feature type="binding site" evidence="1">
    <location>
        <position position="457"/>
    </location>
    <ligand>
        <name>K(+)</name>
        <dbReference type="ChEBI" id="CHEBI:29103"/>
        <label>2</label>
    </ligand>
</feature>
<feature type="binding site" evidence="1">
    <location>
        <position position="460"/>
    </location>
    <ligand>
        <name>K(+)</name>
        <dbReference type="ChEBI" id="CHEBI:29103"/>
        <label>2</label>
    </ligand>
</feature>
<feature type="site" description="Seems to be a necessary countercharge to the potassium cations" evidence="1">
    <location>
        <position position="248"/>
    </location>
</feature>
<feature type="modified residue" description="Cysteine sulfenic acid (-SOH)" evidence="1">
    <location>
        <position position="286"/>
    </location>
</feature>
<reference key="1">
    <citation type="submission" date="2007-02" db="EMBL/GenBank/DDBJ databases">
        <title>Complete sequence of chromosome of Yersinia pestis Pestoides F.</title>
        <authorList>
            <consortium name="US DOE Joint Genome Institute"/>
            <person name="Copeland A."/>
            <person name="Lucas S."/>
            <person name="Lapidus A."/>
            <person name="Barry K."/>
            <person name="Detter J.C."/>
            <person name="Glavina del Rio T."/>
            <person name="Hammon N."/>
            <person name="Israni S."/>
            <person name="Dalin E."/>
            <person name="Tice H."/>
            <person name="Pitluck S."/>
            <person name="Di Bartolo G."/>
            <person name="Chain P."/>
            <person name="Malfatti S."/>
            <person name="Shin M."/>
            <person name="Vergez L."/>
            <person name="Schmutz J."/>
            <person name="Larimer F."/>
            <person name="Land M."/>
            <person name="Hauser L."/>
            <person name="Worsham P."/>
            <person name="Chu M."/>
            <person name="Bearden S."/>
            <person name="Garcia E."/>
            <person name="Richardson P."/>
        </authorList>
    </citation>
    <scope>NUCLEOTIDE SEQUENCE [LARGE SCALE GENOMIC DNA]</scope>
    <source>
        <strain>Pestoides F</strain>
    </source>
</reference>
<comment type="function">
    <text evidence="1">Involved in the biosynthesis of the osmoprotectant glycine betaine. Catalyzes the irreversible oxidation of betaine aldehyde to the corresponding acid.</text>
</comment>
<comment type="catalytic activity">
    <reaction evidence="1">
        <text>betaine aldehyde + NAD(+) + H2O = glycine betaine + NADH + 2 H(+)</text>
        <dbReference type="Rhea" id="RHEA:15305"/>
        <dbReference type="ChEBI" id="CHEBI:15377"/>
        <dbReference type="ChEBI" id="CHEBI:15378"/>
        <dbReference type="ChEBI" id="CHEBI:15710"/>
        <dbReference type="ChEBI" id="CHEBI:17750"/>
        <dbReference type="ChEBI" id="CHEBI:57540"/>
        <dbReference type="ChEBI" id="CHEBI:57945"/>
        <dbReference type="EC" id="1.2.1.8"/>
    </reaction>
    <physiologicalReaction direction="left-to-right" evidence="1">
        <dbReference type="Rhea" id="RHEA:15306"/>
    </physiologicalReaction>
</comment>
<comment type="cofactor">
    <cofactor evidence="1">
        <name>K(+)</name>
        <dbReference type="ChEBI" id="CHEBI:29103"/>
    </cofactor>
    <text evidence="1">Binds 2 potassium ions per subunit.</text>
</comment>
<comment type="pathway">
    <text evidence="1">Amine and polyamine biosynthesis; betaine biosynthesis via choline pathway; betaine from betaine aldehyde: step 1/1.</text>
</comment>
<comment type="subunit">
    <text evidence="1">Dimer of dimers.</text>
</comment>
<comment type="similarity">
    <text evidence="1">Belongs to the aldehyde dehydrogenase family.</text>
</comment>
<organism>
    <name type="scientific">Yersinia pestis (strain Pestoides F)</name>
    <dbReference type="NCBI Taxonomy" id="386656"/>
    <lineage>
        <taxon>Bacteria</taxon>
        <taxon>Pseudomonadati</taxon>
        <taxon>Pseudomonadota</taxon>
        <taxon>Gammaproteobacteria</taxon>
        <taxon>Enterobacterales</taxon>
        <taxon>Yersiniaceae</taxon>
        <taxon>Yersinia</taxon>
    </lineage>
</organism>
<keyword id="KW-0479">Metal-binding</keyword>
<keyword id="KW-0520">NAD</keyword>
<keyword id="KW-0521">NADP</keyword>
<keyword id="KW-0558">Oxidation</keyword>
<keyword id="KW-0560">Oxidoreductase</keyword>
<keyword id="KW-0630">Potassium</keyword>
<gene>
    <name evidence="1" type="primary">betB</name>
    <name type="ordered locus">YPDSF_2531</name>
</gene>
<name>BETB_YERPP</name>